<evidence type="ECO:0000255" key="1">
    <source>
        <dbReference type="HAMAP-Rule" id="MF_01147"/>
    </source>
</evidence>
<dbReference type="EC" id="2.5.1.145" evidence="1"/>
<dbReference type="EMBL" id="CP001182">
    <property type="protein sequence ID" value="ACJ39965.1"/>
    <property type="molecule type" value="Genomic_DNA"/>
</dbReference>
<dbReference type="RefSeq" id="WP_000959085.1">
    <property type="nucleotide sequence ID" value="NC_011586.2"/>
</dbReference>
<dbReference type="SMR" id="B7I4U3"/>
<dbReference type="KEGG" id="abn:AB57_0544"/>
<dbReference type="HOGENOM" id="CLU_013386_1_0_6"/>
<dbReference type="UniPathway" id="UPA00664"/>
<dbReference type="Proteomes" id="UP000007094">
    <property type="component" value="Chromosome"/>
</dbReference>
<dbReference type="GO" id="GO:0005886">
    <property type="term" value="C:plasma membrane"/>
    <property type="evidence" value="ECO:0007669"/>
    <property type="project" value="UniProtKB-SubCell"/>
</dbReference>
<dbReference type="GO" id="GO:0008961">
    <property type="term" value="F:phosphatidylglycerol-prolipoprotein diacylglyceryl transferase activity"/>
    <property type="evidence" value="ECO:0007669"/>
    <property type="project" value="UniProtKB-UniRule"/>
</dbReference>
<dbReference type="GO" id="GO:0042158">
    <property type="term" value="P:lipoprotein biosynthetic process"/>
    <property type="evidence" value="ECO:0007669"/>
    <property type="project" value="UniProtKB-UniRule"/>
</dbReference>
<dbReference type="HAMAP" id="MF_01147">
    <property type="entry name" value="Lgt"/>
    <property type="match status" value="1"/>
</dbReference>
<dbReference type="InterPro" id="IPR001640">
    <property type="entry name" value="Lgt"/>
</dbReference>
<dbReference type="NCBIfam" id="TIGR00544">
    <property type="entry name" value="lgt"/>
    <property type="match status" value="1"/>
</dbReference>
<dbReference type="PANTHER" id="PTHR30589:SF0">
    <property type="entry name" value="PHOSPHATIDYLGLYCEROL--PROLIPOPROTEIN DIACYLGLYCERYL TRANSFERASE"/>
    <property type="match status" value="1"/>
</dbReference>
<dbReference type="PANTHER" id="PTHR30589">
    <property type="entry name" value="PROLIPOPROTEIN DIACYLGLYCERYL TRANSFERASE"/>
    <property type="match status" value="1"/>
</dbReference>
<dbReference type="Pfam" id="PF01790">
    <property type="entry name" value="LGT"/>
    <property type="match status" value="1"/>
</dbReference>
<dbReference type="PROSITE" id="PS01311">
    <property type="entry name" value="LGT"/>
    <property type="match status" value="1"/>
</dbReference>
<comment type="function">
    <text evidence="1">Catalyzes the transfer of the diacylglyceryl group from phosphatidylglycerol to the sulfhydryl group of the N-terminal cysteine of a prolipoprotein, the first step in the formation of mature lipoproteins.</text>
</comment>
<comment type="catalytic activity">
    <reaction evidence="1">
        <text>L-cysteinyl-[prolipoprotein] + a 1,2-diacyl-sn-glycero-3-phospho-(1'-sn-glycerol) = an S-1,2-diacyl-sn-glyceryl-L-cysteinyl-[prolipoprotein] + sn-glycerol 1-phosphate + H(+)</text>
        <dbReference type="Rhea" id="RHEA:56712"/>
        <dbReference type="Rhea" id="RHEA-COMP:14679"/>
        <dbReference type="Rhea" id="RHEA-COMP:14680"/>
        <dbReference type="ChEBI" id="CHEBI:15378"/>
        <dbReference type="ChEBI" id="CHEBI:29950"/>
        <dbReference type="ChEBI" id="CHEBI:57685"/>
        <dbReference type="ChEBI" id="CHEBI:64716"/>
        <dbReference type="ChEBI" id="CHEBI:140658"/>
        <dbReference type="EC" id="2.5.1.145"/>
    </reaction>
</comment>
<comment type="pathway">
    <text evidence="1">Protein modification; lipoprotein biosynthesis (diacylglyceryl transfer).</text>
</comment>
<comment type="subcellular location">
    <subcellularLocation>
        <location evidence="1">Cell inner membrane</location>
        <topology evidence="1">Multi-pass membrane protein</topology>
    </subcellularLocation>
</comment>
<comment type="similarity">
    <text evidence="1">Belongs to the Lgt family.</text>
</comment>
<reference key="1">
    <citation type="journal article" date="2008" name="J. Bacteriol.">
        <title>Comparative genome sequence analysis of multidrug-resistant Acinetobacter baumannii.</title>
        <authorList>
            <person name="Adams M.D."/>
            <person name="Goglin K."/>
            <person name="Molyneaux N."/>
            <person name="Hujer K.M."/>
            <person name="Lavender H."/>
            <person name="Jamison J.J."/>
            <person name="MacDonald I.J."/>
            <person name="Martin K.M."/>
            <person name="Russo T."/>
            <person name="Campagnari A.A."/>
            <person name="Hujer A.M."/>
            <person name="Bonomo R.A."/>
            <person name="Gill S.R."/>
        </authorList>
    </citation>
    <scope>NUCLEOTIDE SEQUENCE [LARGE SCALE GENOMIC DNA]</scope>
    <source>
        <strain>AB0057</strain>
    </source>
</reference>
<keyword id="KW-0997">Cell inner membrane</keyword>
<keyword id="KW-1003">Cell membrane</keyword>
<keyword id="KW-0472">Membrane</keyword>
<keyword id="KW-0808">Transferase</keyword>
<keyword id="KW-0812">Transmembrane</keyword>
<keyword id="KW-1133">Transmembrane helix</keyword>
<gene>
    <name evidence="1" type="primary">lgt</name>
    <name type="ordered locus">AB57_0544</name>
</gene>
<proteinExistence type="inferred from homology"/>
<protein>
    <recommendedName>
        <fullName evidence="1">Phosphatidylglycerol--prolipoprotein diacylglyceryl transferase</fullName>
        <ecNumber evidence="1">2.5.1.145</ecNumber>
    </recommendedName>
</protein>
<organism>
    <name type="scientific">Acinetobacter baumannii (strain AB0057)</name>
    <dbReference type="NCBI Taxonomy" id="480119"/>
    <lineage>
        <taxon>Bacteria</taxon>
        <taxon>Pseudomonadati</taxon>
        <taxon>Pseudomonadota</taxon>
        <taxon>Gammaproteobacteria</taxon>
        <taxon>Moraxellales</taxon>
        <taxon>Moraxellaceae</taxon>
        <taxon>Acinetobacter</taxon>
        <taxon>Acinetobacter calcoaceticus/baumannii complex</taxon>
    </lineage>
</organism>
<feature type="chain" id="PRO_1000137389" description="Phosphatidylglycerol--prolipoprotein diacylglyceryl transferase">
    <location>
        <begin position="1"/>
        <end position="272"/>
    </location>
</feature>
<feature type="transmembrane region" description="Helical" evidence="1">
    <location>
        <begin position="17"/>
        <end position="37"/>
    </location>
</feature>
<feature type="transmembrane region" description="Helical" evidence="1">
    <location>
        <begin position="55"/>
        <end position="75"/>
    </location>
</feature>
<feature type="transmembrane region" description="Helical" evidence="1">
    <location>
        <begin position="90"/>
        <end position="110"/>
    </location>
</feature>
<feature type="transmembrane region" description="Helical" evidence="1">
    <location>
        <begin position="125"/>
        <end position="145"/>
    </location>
</feature>
<feature type="transmembrane region" description="Helical" evidence="1">
    <location>
        <begin position="174"/>
        <end position="194"/>
    </location>
</feature>
<feature type="transmembrane region" description="Helical" evidence="1">
    <location>
        <begin position="202"/>
        <end position="222"/>
    </location>
</feature>
<feature type="transmembrane region" description="Helical" evidence="1">
    <location>
        <begin position="230"/>
        <end position="250"/>
    </location>
</feature>
<feature type="binding site" evidence="1">
    <location>
        <position position="138"/>
    </location>
    <ligand>
        <name>a 1,2-diacyl-sn-glycero-3-phospho-(1'-sn-glycerol)</name>
        <dbReference type="ChEBI" id="CHEBI:64716"/>
    </ligand>
</feature>
<name>LGT_ACIB5</name>
<sequence>MLTYPNIDPVAIHLGPLQVHWYGLMYLLAFLCAWGLASYRAKQRDGWTSDMVSDLVFYGALGVVLGGRIGYVLFYEFDKFLENPIWLFQVWTGGMSFHGGFLGVMIAMLFWCKKYQKTWFQTLDFVAPCVPTGLMFGRIGNFIGGELYGRAVTDPNYPFGMIFPTDPLHLVRHPSQIYQALCEGLLLFIILWWFSSKPRPRMAVSALFLMGYGVARFVMEFFRQPDADQGFILFGWMTKGQILTVPMLLIGLWMMWYAYQKKIYDWGPQKNS</sequence>
<accession>B7I4U3</accession>